<reference key="1">
    <citation type="submission" date="2007-05" db="EMBL/GenBank/DDBJ databases">
        <title>Complete sequence of Pseudomonas putida F1.</title>
        <authorList>
            <consortium name="US DOE Joint Genome Institute"/>
            <person name="Copeland A."/>
            <person name="Lucas S."/>
            <person name="Lapidus A."/>
            <person name="Barry K."/>
            <person name="Detter J.C."/>
            <person name="Glavina del Rio T."/>
            <person name="Hammon N."/>
            <person name="Israni S."/>
            <person name="Dalin E."/>
            <person name="Tice H."/>
            <person name="Pitluck S."/>
            <person name="Chain P."/>
            <person name="Malfatti S."/>
            <person name="Shin M."/>
            <person name="Vergez L."/>
            <person name="Schmutz J."/>
            <person name="Larimer F."/>
            <person name="Land M."/>
            <person name="Hauser L."/>
            <person name="Kyrpides N."/>
            <person name="Lykidis A."/>
            <person name="Parales R."/>
            <person name="Richardson P."/>
        </authorList>
    </citation>
    <scope>NUCLEOTIDE SEQUENCE [LARGE SCALE GENOMIC DNA]</scope>
    <source>
        <strain>ATCC 700007 / DSM 6899 / JCM 31910 / BCRC 17059 / LMG 24140 / F1</strain>
    </source>
</reference>
<protein>
    <recommendedName>
        <fullName evidence="1">Tetraacyldisaccharide 4'-kinase</fullName>
        <ecNumber evidence="1">2.7.1.130</ecNumber>
    </recommendedName>
    <alternativeName>
        <fullName evidence="1">Lipid A 4'-kinase</fullName>
    </alternativeName>
</protein>
<accession>A5W728</accession>
<feature type="chain" id="PRO_0000340850" description="Tetraacyldisaccharide 4'-kinase">
    <location>
        <begin position="1"/>
        <end position="333"/>
    </location>
</feature>
<feature type="binding site" evidence="1">
    <location>
        <begin position="60"/>
        <end position="67"/>
    </location>
    <ligand>
        <name>ATP</name>
        <dbReference type="ChEBI" id="CHEBI:30616"/>
    </ligand>
</feature>
<sequence>MAFADRLLAAWYAGHPALALLRPLEALYRRVVTRKRARFLRGDSASYRAPVPVIVVGNITVGGTGKTPMILWLIEHCRQQGLKVGVVSRGYGARPPRLPWRVQADQPADEAGDEPLLIVQRTGVPLMIDPDRARAVQALLASEPLDLILCDDGMQHYRLARDLELVLIDAARGLGNGRCLPAGPLREPADRLREADAVLFNGASEDRTEGFGFRLQPSALVNVRTGERRALDHFPAGQRLHAVAGIGNPQRFFNTLLGLNWQPVPHPFADHAQFSARSLAFSPPLPLVMTEKDAVKCRAFAADDWWYLAVEAQPTPAFSAWFDNQLQRLLRKP</sequence>
<keyword id="KW-0067">ATP-binding</keyword>
<keyword id="KW-0418">Kinase</keyword>
<keyword id="KW-0441">Lipid A biosynthesis</keyword>
<keyword id="KW-0444">Lipid biosynthesis</keyword>
<keyword id="KW-0443">Lipid metabolism</keyword>
<keyword id="KW-0547">Nucleotide-binding</keyword>
<keyword id="KW-0808">Transferase</keyword>
<comment type="function">
    <text evidence="1">Transfers the gamma-phosphate of ATP to the 4'-position of a tetraacyldisaccharide 1-phosphate intermediate (termed DS-1-P) to form tetraacyldisaccharide 1,4'-bis-phosphate (lipid IVA).</text>
</comment>
<comment type="catalytic activity">
    <reaction evidence="1">
        <text>a lipid A disaccharide + ATP = a lipid IVA + ADP + H(+)</text>
        <dbReference type="Rhea" id="RHEA:67840"/>
        <dbReference type="ChEBI" id="CHEBI:15378"/>
        <dbReference type="ChEBI" id="CHEBI:30616"/>
        <dbReference type="ChEBI" id="CHEBI:176343"/>
        <dbReference type="ChEBI" id="CHEBI:176425"/>
        <dbReference type="ChEBI" id="CHEBI:456216"/>
        <dbReference type="EC" id="2.7.1.130"/>
    </reaction>
</comment>
<comment type="pathway">
    <text evidence="1">Glycolipid biosynthesis; lipid IV(A) biosynthesis; lipid IV(A) from (3R)-3-hydroxytetradecanoyl-[acyl-carrier-protein] and UDP-N-acetyl-alpha-D-glucosamine: step 6/6.</text>
</comment>
<comment type="similarity">
    <text evidence="1">Belongs to the LpxK family.</text>
</comment>
<name>LPXK_PSEP1</name>
<dbReference type="EC" id="2.7.1.130" evidence="1"/>
<dbReference type="EMBL" id="CP000712">
    <property type="protein sequence ID" value="ABQ79938.1"/>
    <property type="molecule type" value="Genomic_DNA"/>
</dbReference>
<dbReference type="SMR" id="A5W728"/>
<dbReference type="KEGG" id="ppf:Pput_3814"/>
<dbReference type="eggNOG" id="COG1663">
    <property type="taxonomic scope" value="Bacteria"/>
</dbReference>
<dbReference type="HOGENOM" id="CLU_038816_2_0_6"/>
<dbReference type="UniPathway" id="UPA00359">
    <property type="reaction ID" value="UER00482"/>
</dbReference>
<dbReference type="GO" id="GO:0005886">
    <property type="term" value="C:plasma membrane"/>
    <property type="evidence" value="ECO:0007669"/>
    <property type="project" value="TreeGrafter"/>
</dbReference>
<dbReference type="GO" id="GO:0005524">
    <property type="term" value="F:ATP binding"/>
    <property type="evidence" value="ECO:0007669"/>
    <property type="project" value="UniProtKB-UniRule"/>
</dbReference>
<dbReference type="GO" id="GO:0009029">
    <property type="term" value="F:tetraacyldisaccharide 4'-kinase activity"/>
    <property type="evidence" value="ECO:0007669"/>
    <property type="project" value="UniProtKB-UniRule"/>
</dbReference>
<dbReference type="GO" id="GO:0009245">
    <property type="term" value="P:lipid A biosynthetic process"/>
    <property type="evidence" value="ECO:0007669"/>
    <property type="project" value="UniProtKB-UniRule"/>
</dbReference>
<dbReference type="GO" id="GO:0009244">
    <property type="term" value="P:lipopolysaccharide core region biosynthetic process"/>
    <property type="evidence" value="ECO:0007669"/>
    <property type="project" value="TreeGrafter"/>
</dbReference>
<dbReference type="HAMAP" id="MF_00409">
    <property type="entry name" value="LpxK"/>
    <property type="match status" value="1"/>
</dbReference>
<dbReference type="InterPro" id="IPR003758">
    <property type="entry name" value="LpxK"/>
</dbReference>
<dbReference type="InterPro" id="IPR027417">
    <property type="entry name" value="P-loop_NTPase"/>
</dbReference>
<dbReference type="NCBIfam" id="TIGR00682">
    <property type="entry name" value="lpxK"/>
    <property type="match status" value="1"/>
</dbReference>
<dbReference type="PANTHER" id="PTHR42724">
    <property type="entry name" value="TETRAACYLDISACCHARIDE 4'-KINASE"/>
    <property type="match status" value="1"/>
</dbReference>
<dbReference type="PANTHER" id="PTHR42724:SF1">
    <property type="entry name" value="TETRAACYLDISACCHARIDE 4'-KINASE, MITOCHONDRIAL-RELATED"/>
    <property type="match status" value="1"/>
</dbReference>
<dbReference type="Pfam" id="PF02606">
    <property type="entry name" value="LpxK"/>
    <property type="match status" value="1"/>
</dbReference>
<dbReference type="SUPFAM" id="SSF52540">
    <property type="entry name" value="P-loop containing nucleoside triphosphate hydrolases"/>
    <property type="match status" value="1"/>
</dbReference>
<evidence type="ECO:0000255" key="1">
    <source>
        <dbReference type="HAMAP-Rule" id="MF_00409"/>
    </source>
</evidence>
<organism>
    <name type="scientific">Pseudomonas putida (strain ATCC 700007 / DSM 6899 / JCM 31910 / BCRC 17059 / LMG 24140 / F1)</name>
    <dbReference type="NCBI Taxonomy" id="351746"/>
    <lineage>
        <taxon>Bacteria</taxon>
        <taxon>Pseudomonadati</taxon>
        <taxon>Pseudomonadota</taxon>
        <taxon>Gammaproteobacteria</taxon>
        <taxon>Pseudomonadales</taxon>
        <taxon>Pseudomonadaceae</taxon>
        <taxon>Pseudomonas</taxon>
    </lineage>
</organism>
<gene>
    <name evidence="1" type="primary">lpxK</name>
    <name type="ordered locus">Pput_3814</name>
</gene>
<proteinExistence type="inferred from homology"/>